<reference key="1">
    <citation type="journal article" date="2002" name="Plant Physiol. Biochem.">
        <title>Mapping and analysis of a hemoglobin gene family from rice (Oryza sativa).</title>
        <authorList>
            <person name="Lira-Ruan V."/>
            <person name="Ross E.J.H."/>
            <person name="Sarath G."/>
            <person name="Klucas R.V."/>
            <person name="Arredondo-Peter R."/>
        </authorList>
    </citation>
    <scope>NUCLEOTIDE SEQUENCE [GENOMIC DNA]</scope>
    <source>
        <strain>cv. Nipponbare</strain>
    </source>
</reference>
<reference key="2">
    <citation type="journal article" date="2005" name="Genome Res.">
        <title>Sequence, annotation, and analysis of synteny between rice chromosome 3 and diverged grass species.</title>
        <authorList>
            <consortium name="The rice chromosome 3 sequencing consortium"/>
            <person name="Buell C.R."/>
            <person name="Yuan Q."/>
            <person name="Ouyang S."/>
            <person name="Liu J."/>
            <person name="Zhu W."/>
            <person name="Wang A."/>
            <person name="Maiti R."/>
            <person name="Haas B."/>
            <person name="Wortman J."/>
            <person name="Pertea M."/>
            <person name="Jones K.M."/>
            <person name="Kim M."/>
            <person name="Overton L."/>
            <person name="Tsitrin T."/>
            <person name="Fadrosh D."/>
            <person name="Bera J."/>
            <person name="Weaver B."/>
            <person name="Jin S."/>
            <person name="Johri S."/>
            <person name="Reardon M."/>
            <person name="Webb K."/>
            <person name="Hill J."/>
            <person name="Moffat K."/>
            <person name="Tallon L."/>
            <person name="Van Aken S."/>
            <person name="Lewis M."/>
            <person name="Utterback T."/>
            <person name="Feldblyum T."/>
            <person name="Zismann V."/>
            <person name="Iobst S."/>
            <person name="Hsiao J."/>
            <person name="de Vazeille A.R."/>
            <person name="Salzberg S.L."/>
            <person name="White O."/>
            <person name="Fraser C.M."/>
            <person name="Yu Y."/>
            <person name="Kim H."/>
            <person name="Rambo T."/>
            <person name="Currie J."/>
            <person name="Collura K."/>
            <person name="Kernodle-Thompson S."/>
            <person name="Wei F."/>
            <person name="Kudrna K."/>
            <person name="Ammiraju J.S.S."/>
            <person name="Luo M."/>
            <person name="Goicoechea J.L."/>
            <person name="Wing R.A."/>
            <person name="Henry D."/>
            <person name="Oates R."/>
            <person name="Palmer M."/>
            <person name="Pries G."/>
            <person name="Saski C."/>
            <person name="Simmons J."/>
            <person name="Soderlund C."/>
            <person name="Nelson W."/>
            <person name="de la Bastide M."/>
            <person name="Spiegel L."/>
            <person name="Nascimento L."/>
            <person name="Huang E."/>
            <person name="Preston R."/>
            <person name="Zutavern T."/>
            <person name="Palmer L."/>
            <person name="O'Shaughnessy A."/>
            <person name="Dike S."/>
            <person name="McCombie W.R."/>
            <person name="Minx P."/>
            <person name="Cordum H."/>
            <person name="Wilson R."/>
            <person name="Jin W."/>
            <person name="Lee H.R."/>
            <person name="Jiang J."/>
            <person name="Jackson S."/>
        </authorList>
    </citation>
    <scope>NUCLEOTIDE SEQUENCE [LARGE SCALE GENOMIC DNA]</scope>
    <source>
        <strain>cv. Nipponbare</strain>
    </source>
</reference>
<reference key="3">
    <citation type="journal article" date="2005" name="Nature">
        <title>The map-based sequence of the rice genome.</title>
        <authorList>
            <consortium name="International rice genome sequencing project (IRGSP)"/>
        </authorList>
    </citation>
    <scope>NUCLEOTIDE SEQUENCE [LARGE SCALE GENOMIC DNA]</scope>
    <source>
        <strain>cv. Nipponbare</strain>
    </source>
</reference>
<reference key="4">
    <citation type="journal article" date="2008" name="Nucleic Acids Res.">
        <title>The rice annotation project database (RAP-DB): 2008 update.</title>
        <authorList>
            <consortium name="The rice annotation project (RAP)"/>
        </authorList>
    </citation>
    <scope>GENOME REANNOTATION</scope>
    <source>
        <strain>cv. Nipponbare</strain>
    </source>
</reference>
<reference key="5">
    <citation type="journal article" date="2013" name="Rice">
        <title>Improvement of the Oryza sativa Nipponbare reference genome using next generation sequence and optical map data.</title>
        <authorList>
            <person name="Kawahara Y."/>
            <person name="de la Bastide M."/>
            <person name="Hamilton J.P."/>
            <person name="Kanamori H."/>
            <person name="McCombie W.R."/>
            <person name="Ouyang S."/>
            <person name="Schwartz D.C."/>
            <person name="Tanaka T."/>
            <person name="Wu J."/>
            <person name="Zhou S."/>
            <person name="Childs K.L."/>
            <person name="Davidson R.M."/>
            <person name="Lin H."/>
            <person name="Quesada-Ocampo L."/>
            <person name="Vaillancourt B."/>
            <person name="Sakai H."/>
            <person name="Lee S.S."/>
            <person name="Kim J."/>
            <person name="Numa H."/>
            <person name="Itoh T."/>
            <person name="Buell C.R."/>
            <person name="Matsumoto T."/>
        </authorList>
    </citation>
    <scope>GENOME REANNOTATION</scope>
    <source>
        <strain>cv. Nipponbare</strain>
    </source>
</reference>
<reference key="6">
    <citation type="journal article" date="2005" name="PLoS Biol.">
        <title>The genomes of Oryza sativa: a history of duplications.</title>
        <authorList>
            <person name="Yu J."/>
            <person name="Wang J."/>
            <person name="Lin W."/>
            <person name="Li S."/>
            <person name="Li H."/>
            <person name="Zhou J."/>
            <person name="Ni P."/>
            <person name="Dong W."/>
            <person name="Hu S."/>
            <person name="Zeng C."/>
            <person name="Zhang J."/>
            <person name="Zhang Y."/>
            <person name="Li R."/>
            <person name="Xu Z."/>
            <person name="Li S."/>
            <person name="Li X."/>
            <person name="Zheng H."/>
            <person name="Cong L."/>
            <person name="Lin L."/>
            <person name="Yin J."/>
            <person name="Geng J."/>
            <person name="Li G."/>
            <person name="Shi J."/>
            <person name="Liu J."/>
            <person name="Lv H."/>
            <person name="Li J."/>
            <person name="Wang J."/>
            <person name="Deng Y."/>
            <person name="Ran L."/>
            <person name="Shi X."/>
            <person name="Wang X."/>
            <person name="Wu Q."/>
            <person name="Li C."/>
            <person name="Ren X."/>
            <person name="Wang J."/>
            <person name="Wang X."/>
            <person name="Li D."/>
            <person name="Liu D."/>
            <person name="Zhang X."/>
            <person name="Ji Z."/>
            <person name="Zhao W."/>
            <person name="Sun Y."/>
            <person name="Zhang Z."/>
            <person name="Bao J."/>
            <person name="Han Y."/>
            <person name="Dong L."/>
            <person name="Ji J."/>
            <person name="Chen P."/>
            <person name="Wu S."/>
            <person name="Liu J."/>
            <person name="Xiao Y."/>
            <person name="Bu D."/>
            <person name="Tan J."/>
            <person name="Yang L."/>
            <person name="Ye C."/>
            <person name="Zhang J."/>
            <person name="Xu J."/>
            <person name="Zhou Y."/>
            <person name="Yu Y."/>
            <person name="Zhang B."/>
            <person name="Zhuang S."/>
            <person name="Wei H."/>
            <person name="Liu B."/>
            <person name="Lei M."/>
            <person name="Yu H."/>
            <person name="Li Y."/>
            <person name="Xu H."/>
            <person name="Wei S."/>
            <person name="He X."/>
            <person name="Fang L."/>
            <person name="Zhang Z."/>
            <person name="Zhang Y."/>
            <person name="Huang X."/>
            <person name="Su Z."/>
            <person name="Tong W."/>
            <person name="Li J."/>
            <person name="Tong Z."/>
            <person name="Li S."/>
            <person name="Ye J."/>
            <person name="Wang L."/>
            <person name="Fang L."/>
            <person name="Lei T."/>
            <person name="Chen C.-S."/>
            <person name="Chen H.-C."/>
            <person name="Xu Z."/>
            <person name="Li H."/>
            <person name="Huang H."/>
            <person name="Zhang F."/>
            <person name="Xu H."/>
            <person name="Li N."/>
            <person name="Zhao C."/>
            <person name="Li S."/>
            <person name="Dong L."/>
            <person name="Huang Y."/>
            <person name="Li L."/>
            <person name="Xi Y."/>
            <person name="Qi Q."/>
            <person name="Li W."/>
            <person name="Zhang B."/>
            <person name="Hu W."/>
            <person name="Zhang Y."/>
            <person name="Tian X."/>
            <person name="Jiao Y."/>
            <person name="Liang X."/>
            <person name="Jin J."/>
            <person name="Gao L."/>
            <person name="Zheng W."/>
            <person name="Hao B."/>
            <person name="Liu S.-M."/>
            <person name="Wang W."/>
            <person name="Yuan L."/>
            <person name="Cao M."/>
            <person name="McDermott J."/>
            <person name="Samudrala R."/>
            <person name="Wang J."/>
            <person name="Wong G.K.-S."/>
            <person name="Yang H."/>
        </authorList>
    </citation>
    <scope>NUCLEOTIDE SEQUENCE [LARGE SCALE GENOMIC DNA]</scope>
    <source>
        <strain>cv. Nipponbare</strain>
    </source>
</reference>
<reference key="7">
    <citation type="journal article" date="2001" name="Plant Sci.">
        <title>Synthesis of hemoglobins in rice (Oryza sativa var. Jackson) plants growing in normal and stress conditions.</title>
        <authorList>
            <person name="Lira-Ruan V."/>
            <person name="Sarath G."/>
            <person name="Klucas R.V."/>
            <person name="Arredondo-Peter R."/>
        </authorList>
    </citation>
    <scope>INDUCTION</scope>
    <source>
        <strain>cv. Jackson</strain>
    </source>
</reference>
<reference key="8">
    <citation type="journal article" date="2007" name="Gene">
        <title>Plant hemoglobins: what we know six decades after their discovery.</title>
        <authorList>
            <person name="Garrocho-Villegas V."/>
            <person name="Gopalasubramaniam S.K."/>
            <person name="Arredondo-Peter R."/>
        </authorList>
    </citation>
    <scope>REVIEW</scope>
</reference>
<reference key="9">
    <citation type="journal article" date="2008" name="Plant Physiol. Biochem.">
        <title>Expression and in silico structural analysis of a rice (Oryza sativa) hemoglobin 5.</title>
        <authorList>
            <person name="Garrocho-Villegas V."/>
            <person name="Bustos-Rivera G."/>
            <person name="Gough J."/>
            <person name="Vinogradov S.N."/>
            <person name="Arredondo-Peter R."/>
        </authorList>
    </citation>
    <scope>GENE FAMILY</scope>
    <source>
        <strain>cv. Morelos</strain>
    </source>
</reference>
<proteinExistence type="evidence at transcript level"/>
<feature type="chain" id="PRO_0000193024" description="Anaerobic nitrite reductase NSHB4">
    <location>
        <begin position="1"/>
        <end position="167"/>
    </location>
</feature>
<feature type="domain" description="Globin" evidence="5">
    <location>
        <begin position="12"/>
        <end position="162"/>
    </location>
</feature>
<feature type="short sequence motif" description="Homodimerization" evidence="2">
    <location>
        <begin position="45"/>
        <end position="49"/>
    </location>
</feature>
<feature type="short sequence motif" description="Homodimerization" evidence="2">
    <location>
        <begin position="115"/>
        <end position="127"/>
    </location>
</feature>
<feature type="binding site" evidence="3">
    <location>
        <position position="55"/>
    </location>
    <ligand>
        <name>heme b</name>
        <dbReference type="ChEBI" id="CHEBI:60344"/>
    </ligand>
</feature>
<feature type="binding site" description="distal binding residue" evidence="5">
    <location>
        <position position="73"/>
    </location>
    <ligand>
        <name>heme b</name>
        <dbReference type="ChEBI" id="CHEBI:60344"/>
    </ligand>
    <ligandPart>
        <name>Fe</name>
        <dbReference type="ChEBI" id="CHEBI:18248"/>
    </ligandPart>
</feature>
<feature type="binding site" evidence="2">
    <location>
        <position position="103"/>
    </location>
    <ligand>
        <name>heme b</name>
        <dbReference type="ChEBI" id="CHEBI:60344"/>
    </ligand>
</feature>
<feature type="binding site" evidence="2">
    <location>
        <position position="107"/>
    </location>
    <ligand>
        <name>heme b</name>
        <dbReference type="ChEBI" id="CHEBI:60344"/>
    </ligand>
</feature>
<feature type="binding site" description="proximal binding residue" evidence="5">
    <location>
        <position position="108"/>
    </location>
    <ligand>
        <name>heme b</name>
        <dbReference type="ChEBI" id="CHEBI:60344"/>
    </ligand>
    <ligandPart>
        <name>Fe</name>
        <dbReference type="ChEBI" id="CHEBI:18248"/>
    </ligandPart>
</feature>
<feature type="site" description="Homodimerization" evidence="2">
    <location>
        <position position="143"/>
    </location>
</feature>
<name>NSHB4_ORYSJ</name>
<evidence type="ECO:0000250" key="1">
    <source>
        <dbReference type="UniProtKB" id="A2XE98"/>
    </source>
</evidence>
<evidence type="ECO:0000250" key="2">
    <source>
        <dbReference type="UniProtKB" id="O04986"/>
    </source>
</evidence>
<evidence type="ECO:0000250" key="3">
    <source>
        <dbReference type="UniProtKB" id="P68168"/>
    </source>
</evidence>
<evidence type="ECO:0000250" key="4">
    <source>
        <dbReference type="UniProtKB" id="Q42831"/>
    </source>
</evidence>
<evidence type="ECO:0000255" key="5">
    <source>
        <dbReference type="PROSITE-ProRule" id="PRU00238"/>
    </source>
</evidence>
<evidence type="ECO:0000269" key="6">
    <source>
    </source>
</evidence>
<evidence type="ECO:0000303" key="7">
    <source>
    </source>
</evidence>
<evidence type="ECO:0000303" key="8">
    <source ref="1"/>
</evidence>
<evidence type="ECO:0000305" key="9"/>
<evidence type="ECO:0000312" key="10">
    <source>
        <dbReference type="EMBL" id="AAM19123.1"/>
    </source>
</evidence>
<evidence type="ECO:0000312" key="11">
    <source>
        <dbReference type="EMBL" id="EAZ26182.1"/>
    </source>
</evidence>
<protein>
    <recommendedName>
        <fullName evidence="9">Anaerobic nitrite reductase NSHB4</fullName>
        <ecNumber evidence="2">1.7.2.-</ecNumber>
    </recommendedName>
    <alternativeName>
        <fullName evidence="8">Non-symbiotic hemoglobin 4</fullName>
        <shortName evidence="9">OsNSHB4</shortName>
        <shortName evidence="7">nsHb4-1</shortName>
        <shortName evidence="8">rHb4</shortName>
    </alternativeName>
    <alternativeName>
        <fullName evidence="9">ORYsa GLB1d</fullName>
    </alternativeName>
    <alternativeName>
        <fullName evidence="9">Phytoglobin 1.4</fullName>
        <shortName evidence="9">OsPgb1.4</shortName>
        <shortName evidence="9">Phytogb1.4</shortName>
    </alternativeName>
</protein>
<keyword id="KW-0963">Cytoplasm</keyword>
<keyword id="KW-0349">Heme</keyword>
<keyword id="KW-0408">Iron</keyword>
<keyword id="KW-0479">Metal-binding</keyword>
<keyword id="KW-0539">Nucleus</keyword>
<keyword id="KW-0560">Oxidoreductase</keyword>
<keyword id="KW-0561">Oxygen transport</keyword>
<keyword id="KW-1185">Reference proteome</keyword>
<keyword id="KW-0813">Transport</keyword>
<sequence>MAFASASNGAVRFTEEQEALVLKSWAIMKDDSANIGHRFFLKIFEVAPSARHLFSFLRNSDVPLEKNPNLKKHAMAVFVMTCEAAAQLRKTGRVTVRDTTIKRLGSTHFKNGVSDTHFEVARFALLETIKDGIPASMWSPEMKNAWGEAYEHLVAAIKEGMKPVALL</sequence>
<dbReference type="EC" id="1.7.2.-" evidence="2"/>
<dbReference type="EMBL" id="AF335504">
    <property type="protein sequence ID" value="AAK72231.1"/>
    <property type="molecule type" value="Genomic_DNA"/>
</dbReference>
<dbReference type="EMBL" id="AC103891">
    <property type="protein sequence ID" value="AAM19123.1"/>
    <property type="molecule type" value="Genomic_DNA"/>
</dbReference>
<dbReference type="EMBL" id="DP000009">
    <property type="protein sequence ID" value="ABF94824.1"/>
    <property type="molecule type" value="Genomic_DNA"/>
</dbReference>
<dbReference type="EMBL" id="AP008209">
    <property type="protein sequence ID" value="BAF11392.1"/>
    <property type="molecule type" value="Genomic_DNA"/>
</dbReference>
<dbReference type="EMBL" id="AP014959">
    <property type="protein sequence ID" value="BAS83135.1"/>
    <property type="molecule type" value="Genomic_DNA"/>
</dbReference>
<dbReference type="EMBL" id="CM000140">
    <property type="protein sequence ID" value="EAZ26182.1"/>
    <property type="molecule type" value="Genomic_DNA"/>
</dbReference>
<dbReference type="RefSeq" id="NP_001404371.1">
    <property type="nucleotide sequence ID" value="NM_001417442.1"/>
</dbReference>
<dbReference type="RefSeq" id="XP_015629793.1">
    <property type="nucleotide sequence ID" value="XM_015774307.1"/>
</dbReference>
<dbReference type="SMR" id="Q94FT7"/>
<dbReference type="FunCoup" id="Q94FT7">
    <property type="interactions" value="1085"/>
</dbReference>
<dbReference type="STRING" id="39947.Q94FT7"/>
<dbReference type="PaxDb" id="39947-Q94FT7"/>
<dbReference type="EnsemblPlants" id="Os03t0234100-01">
    <property type="protein sequence ID" value="Os03t0234100-01"/>
    <property type="gene ID" value="Os03g0234100"/>
</dbReference>
<dbReference type="GeneID" id="4332168"/>
<dbReference type="Gramene" id="Os03t0234100-01">
    <property type="protein sequence ID" value="Os03t0234100-01"/>
    <property type="gene ID" value="Os03g0234100"/>
</dbReference>
<dbReference type="KEGG" id="dosa:Os03g0234100"/>
<dbReference type="eggNOG" id="KOG3378">
    <property type="taxonomic scope" value="Eukaryota"/>
</dbReference>
<dbReference type="HOGENOM" id="CLU_003827_11_0_1"/>
<dbReference type="InParanoid" id="Q94FT7"/>
<dbReference type="OMA" id="GERHVEY"/>
<dbReference type="OrthoDB" id="436496at2759"/>
<dbReference type="Proteomes" id="UP000000763">
    <property type="component" value="Chromosome 3"/>
</dbReference>
<dbReference type="Proteomes" id="UP000007752">
    <property type="component" value="Chromosome 3"/>
</dbReference>
<dbReference type="Proteomes" id="UP000059680">
    <property type="component" value="Chromosome 3"/>
</dbReference>
<dbReference type="GO" id="GO:0005737">
    <property type="term" value="C:cytoplasm"/>
    <property type="evidence" value="ECO:0000250"/>
    <property type="project" value="UniProtKB"/>
</dbReference>
<dbReference type="GO" id="GO:0005634">
    <property type="term" value="C:nucleus"/>
    <property type="evidence" value="ECO:0000250"/>
    <property type="project" value="UniProtKB"/>
</dbReference>
<dbReference type="GO" id="GO:0020037">
    <property type="term" value="F:heme binding"/>
    <property type="evidence" value="ECO:0007669"/>
    <property type="project" value="InterPro"/>
</dbReference>
<dbReference type="GO" id="GO:0046872">
    <property type="term" value="F:metal ion binding"/>
    <property type="evidence" value="ECO:0007669"/>
    <property type="project" value="UniProtKB-KW"/>
</dbReference>
<dbReference type="GO" id="GO:0016491">
    <property type="term" value="F:oxidoreductase activity"/>
    <property type="evidence" value="ECO:0007669"/>
    <property type="project" value="UniProtKB-KW"/>
</dbReference>
<dbReference type="GO" id="GO:0019825">
    <property type="term" value="F:oxygen binding"/>
    <property type="evidence" value="ECO:0007669"/>
    <property type="project" value="InterPro"/>
</dbReference>
<dbReference type="GO" id="GO:0005344">
    <property type="term" value="F:oxygen carrier activity"/>
    <property type="evidence" value="ECO:0007669"/>
    <property type="project" value="UniProtKB-KW"/>
</dbReference>
<dbReference type="CDD" id="cd14784">
    <property type="entry name" value="class1_nsHb-like"/>
    <property type="match status" value="1"/>
</dbReference>
<dbReference type="Gene3D" id="1.10.490.10">
    <property type="entry name" value="Globins"/>
    <property type="match status" value="1"/>
</dbReference>
<dbReference type="InterPro" id="IPR000971">
    <property type="entry name" value="Globin"/>
</dbReference>
<dbReference type="InterPro" id="IPR009050">
    <property type="entry name" value="Globin-like_sf"/>
</dbReference>
<dbReference type="InterPro" id="IPR012292">
    <property type="entry name" value="Globin/Proto"/>
</dbReference>
<dbReference type="InterPro" id="IPR001032">
    <property type="entry name" value="Leghaemoglobin-like"/>
</dbReference>
<dbReference type="InterPro" id="IPR019824">
    <property type="entry name" value="Leghaemoglobin_Fe_BS"/>
</dbReference>
<dbReference type="PANTHER" id="PTHR22924">
    <property type="entry name" value="LEGHEMOGLOBIN-RELATED"/>
    <property type="match status" value="1"/>
</dbReference>
<dbReference type="PANTHER" id="PTHR22924:SF98">
    <property type="entry name" value="NON-SYMBIOTIC HEMOGLOBIN 3"/>
    <property type="match status" value="1"/>
</dbReference>
<dbReference type="Pfam" id="PF00042">
    <property type="entry name" value="Globin"/>
    <property type="match status" value="1"/>
</dbReference>
<dbReference type="PRINTS" id="PR00188">
    <property type="entry name" value="PLANTGLOBIN"/>
</dbReference>
<dbReference type="SUPFAM" id="SSF46458">
    <property type="entry name" value="Globin-like"/>
    <property type="match status" value="1"/>
</dbReference>
<dbReference type="PROSITE" id="PS01033">
    <property type="entry name" value="GLOBIN"/>
    <property type="match status" value="1"/>
</dbReference>
<dbReference type="PROSITE" id="PS00208">
    <property type="entry name" value="PLANT_GLOBIN"/>
    <property type="match status" value="1"/>
</dbReference>
<accession>Q94FT7</accession>
<accession>Q10PH2</accession>
<gene>
    <name evidence="9" type="primary">NSHB4</name>
    <name evidence="9" type="synonym">GLB1D</name>
    <name evidence="8" type="synonym">HB4</name>
    <name evidence="7" type="synonym">Hb4-1</name>
    <name evidence="9" type="ordered locus">Os03g0234100</name>
    <name evidence="9" type="ordered locus">LOC_Os03g13160</name>
    <name evidence="10" type="ORF">OJ1175C11.3</name>
    <name evidence="11" type="ORF">OsJ_10049</name>
</gene>
<organism>
    <name type="scientific">Oryza sativa subsp. japonica</name>
    <name type="common">Rice</name>
    <dbReference type="NCBI Taxonomy" id="39947"/>
    <lineage>
        <taxon>Eukaryota</taxon>
        <taxon>Viridiplantae</taxon>
        <taxon>Streptophyta</taxon>
        <taxon>Embryophyta</taxon>
        <taxon>Tracheophyta</taxon>
        <taxon>Spermatophyta</taxon>
        <taxon>Magnoliopsida</taxon>
        <taxon>Liliopsida</taxon>
        <taxon>Poales</taxon>
        <taxon>Poaceae</taxon>
        <taxon>BOP clade</taxon>
        <taxon>Oryzoideae</taxon>
        <taxon>Oryzeae</taxon>
        <taxon>Oryzinae</taxon>
        <taxon>Oryza</taxon>
        <taxon>Oryza sativa</taxon>
    </lineage>
</organism>
<comment type="function">
    <text evidence="2 4">Phytoglobin that reduces nitrite to nitric oxide under anoxic conditions (e.g. during flooding or in waterlogged soil) (By similarity). May not function as an oxygen storage or transport protein (By similarity). Has an unusually high affinity for O(2) through an hexacoordinate heme iron because of a very low dissociation constant (By similarity).</text>
</comment>
<comment type="catalytic activity">
    <reaction evidence="2">
        <text>Fe(III)-heme b-[protein] + nitric oxide + H2O = Fe(II)-heme b-[protein] + nitrite + 2 H(+)</text>
        <dbReference type="Rhea" id="RHEA:77711"/>
        <dbReference type="Rhea" id="RHEA-COMP:18975"/>
        <dbReference type="Rhea" id="RHEA-COMP:18976"/>
        <dbReference type="ChEBI" id="CHEBI:15377"/>
        <dbReference type="ChEBI" id="CHEBI:15378"/>
        <dbReference type="ChEBI" id="CHEBI:16301"/>
        <dbReference type="ChEBI" id="CHEBI:16480"/>
        <dbReference type="ChEBI" id="CHEBI:55376"/>
        <dbReference type="ChEBI" id="CHEBI:60344"/>
    </reaction>
    <physiologicalReaction direction="right-to-left" evidence="2">
        <dbReference type="Rhea" id="RHEA:77713"/>
    </physiologicalReaction>
</comment>
<comment type="cofactor">
    <cofactor evidence="3">
        <name>heme b</name>
        <dbReference type="ChEBI" id="CHEBI:60344"/>
    </cofactor>
    <text evidence="3">Binds 1 heme group per subunit.</text>
</comment>
<comment type="subunit">
    <text evidence="2">Homodimer.</text>
</comment>
<comment type="subcellular location">
    <subcellularLocation>
        <location evidence="1">Cytoplasm</location>
    </subcellularLocation>
    <subcellularLocation>
        <location evidence="1">Nucleus</location>
    </subcellularLocation>
</comment>
<comment type="induction">
    <text evidence="6">By flooding and etiolating but not by oxidative, nitrosative or hormonal stresses.</text>
</comment>
<comment type="similarity">
    <text evidence="9">Belongs to the plant globin family.</text>
</comment>